<sequence length="384" mass="42918">MSYPNNKENSNNIGGGSFSVPSKQPQRVLQQQNTNINNHQTTSTVKSTITKPTTTGATTSTNTSTIPPTTTASSSSSSSSSSSSSSSSSSSSSSSSSQSVPKKKWCIDDFDIGKLLGMGRFGHVYLAREKKSQFIVALKVLFKNQLQTHNIEHQLRREIEIQSHLRHPNILRLFGYFYDDKRVFLIIEFAKGGECFKELQKVGSFNEQTAATYTLQIADALRYCHSKHVIHRDIKPENLLIGVGGEIKIADFGWSVHAPNTKRSTFCGTLEYLPPEVIEKKGYDQTADVWSLGILIFEFLVGRSPFTSDEEKNIFHNIQENDVYYPSSISPEAKDLISRLLVSDPHQRITLKDVINHPWIKKHAHPKSLEPTKLGLPLPSQMTY</sequence>
<accession>Q54WX4</accession>
<dbReference type="EC" id="2.7.11.1"/>
<dbReference type="EMBL" id="AAFI02000030">
    <property type="protein sequence ID" value="EAL67820.1"/>
    <property type="molecule type" value="Genomic_DNA"/>
</dbReference>
<dbReference type="RefSeq" id="XP_641803.1">
    <property type="nucleotide sequence ID" value="XM_636711.1"/>
</dbReference>
<dbReference type="SMR" id="Q54WX4"/>
<dbReference type="FunCoup" id="Q54WX4">
    <property type="interactions" value="124"/>
</dbReference>
<dbReference type="IntAct" id="Q54WX4">
    <property type="interactions" value="2"/>
</dbReference>
<dbReference type="STRING" id="44689.Q54WX4"/>
<dbReference type="PaxDb" id="44689-DDB0216254"/>
<dbReference type="EnsemblProtists" id="EAL67820">
    <property type="protein sequence ID" value="EAL67820"/>
    <property type="gene ID" value="DDB_G0279343"/>
</dbReference>
<dbReference type="GeneID" id="8622000"/>
<dbReference type="KEGG" id="ddi:DDB_G0279343"/>
<dbReference type="dictyBase" id="DDB_G0279343">
    <property type="gene designation" value="aurK"/>
</dbReference>
<dbReference type="VEuPathDB" id="AmoebaDB:DDB_G0279343"/>
<dbReference type="eggNOG" id="KOG0580">
    <property type="taxonomic scope" value="Eukaryota"/>
</dbReference>
<dbReference type="HOGENOM" id="CLU_000288_63_6_1"/>
<dbReference type="InParanoid" id="Q54WX4"/>
<dbReference type="OMA" id="ESRFPEW"/>
<dbReference type="PhylomeDB" id="Q54WX4"/>
<dbReference type="Reactome" id="R-DDI-174178">
    <property type="pathway name" value="APC/C:Cdh1 mediated degradation of Cdc20 and other APC/C:Cdh1 targeted proteins in late mitosis/early G1"/>
</dbReference>
<dbReference type="Reactome" id="R-DDI-8854050">
    <property type="pathway name" value="FBXL7 down-regulates AURKA during mitotic entry and in early mitosis"/>
</dbReference>
<dbReference type="PRO" id="PR:Q54WX4"/>
<dbReference type="Proteomes" id="UP000002195">
    <property type="component" value="Chromosome 3"/>
</dbReference>
<dbReference type="GO" id="GO:0042995">
    <property type="term" value="C:cell projection"/>
    <property type="evidence" value="ECO:0007669"/>
    <property type="project" value="UniProtKB-KW"/>
</dbReference>
<dbReference type="GO" id="GO:0005813">
    <property type="term" value="C:centrosome"/>
    <property type="evidence" value="ECO:0000314"/>
    <property type="project" value="dictyBase"/>
</dbReference>
<dbReference type="GO" id="GO:0032133">
    <property type="term" value="C:chromosome passenger complex"/>
    <property type="evidence" value="ECO:0000314"/>
    <property type="project" value="dictyBase"/>
</dbReference>
<dbReference type="GO" id="GO:0032154">
    <property type="term" value="C:cleavage furrow"/>
    <property type="evidence" value="ECO:0000314"/>
    <property type="project" value="dictyBase"/>
</dbReference>
<dbReference type="GO" id="GO:0005737">
    <property type="term" value="C:cytoplasm"/>
    <property type="evidence" value="ECO:0000314"/>
    <property type="project" value="dictyBase"/>
</dbReference>
<dbReference type="GO" id="GO:0000776">
    <property type="term" value="C:kinetochore"/>
    <property type="evidence" value="ECO:0000318"/>
    <property type="project" value="GO_Central"/>
</dbReference>
<dbReference type="GO" id="GO:0005635">
    <property type="term" value="C:nuclear envelope"/>
    <property type="evidence" value="ECO:0000314"/>
    <property type="project" value="dictyBase"/>
</dbReference>
<dbReference type="GO" id="GO:0005730">
    <property type="term" value="C:nucleolus"/>
    <property type="evidence" value="ECO:0000314"/>
    <property type="project" value="dictyBase"/>
</dbReference>
<dbReference type="GO" id="GO:0005634">
    <property type="term" value="C:nucleus"/>
    <property type="evidence" value="ECO:0000318"/>
    <property type="project" value="GO_Central"/>
</dbReference>
<dbReference type="GO" id="GO:0005876">
    <property type="term" value="C:spindle microtubule"/>
    <property type="evidence" value="ECO:0000318"/>
    <property type="project" value="GO_Central"/>
</dbReference>
<dbReference type="GO" id="GO:0051233">
    <property type="term" value="C:spindle midzone"/>
    <property type="evidence" value="ECO:0000314"/>
    <property type="project" value="dictyBase"/>
</dbReference>
<dbReference type="GO" id="GO:0000922">
    <property type="term" value="C:spindle pole"/>
    <property type="evidence" value="ECO:0000314"/>
    <property type="project" value="dictyBase"/>
</dbReference>
<dbReference type="GO" id="GO:0005524">
    <property type="term" value="F:ATP binding"/>
    <property type="evidence" value="ECO:0007669"/>
    <property type="project" value="UniProtKB-KW"/>
</dbReference>
<dbReference type="GO" id="GO:0004672">
    <property type="term" value="F:protein kinase activity"/>
    <property type="evidence" value="ECO:0000250"/>
    <property type="project" value="dictyBase"/>
</dbReference>
<dbReference type="GO" id="GO:0106310">
    <property type="term" value="F:protein serine kinase activity"/>
    <property type="evidence" value="ECO:0007669"/>
    <property type="project" value="RHEA"/>
</dbReference>
<dbReference type="GO" id="GO:0004674">
    <property type="term" value="F:protein serine/threonine kinase activity"/>
    <property type="evidence" value="ECO:0007669"/>
    <property type="project" value="UniProtKB-KW"/>
</dbReference>
<dbReference type="GO" id="GO:0051642">
    <property type="term" value="P:centrosome localization"/>
    <property type="evidence" value="ECO:0000314"/>
    <property type="project" value="dictyBase"/>
</dbReference>
<dbReference type="GO" id="GO:0000278">
    <property type="term" value="P:mitotic cell cycle"/>
    <property type="evidence" value="ECO:0000250"/>
    <property type="project" value="dictyBase"/>
</dbReference>
<dbReference type="GO" id="GO:0007052">
    <property type="term" value="P:mitotic spindle organization"/>
    <property type="evidence" value="ECO:0000318"/>
    <property type="project" value="GO_Central"/>
</dbReference>
<dbReference type="GO" id="GO:0032465">
    <property type="term" value="P:regulation of cytokinesis"/>
    <property type="evidence" value="ECO:0000318"/>
    <property type="project" value="GO_Central"/>
</dbReference>
<dbReference type="CDD" id="cd14007">
    <property type="entry name" value="STKc_Aurora"/>
    <property type="match status" value="1"/>
</dbReference>
<dbReference type="FunFam" id="3.30.200.20:FF:000042">
    <property type="entry name" value="Aurora kinase A"/>
    <property type="match status" value="1"/>
</dbReference>
<dbReference type="FunFam" id="1.10.510.10:FF:000235">
    <property type="entry name" value="Serine/threonine-protein kinase ark1"/>
    <property type="match status" value="1"/>
</dbReference>
<dbReference type="Gene3D" id="3.30.200.20">
    <property type="entry name" value="Phosphorylase Kinase, domain 1"/>
    <property type="match status" value="1"/>
</dbReference>
<dbReference type="Gene3D" id="1.10.510.10">
    <property type="entry name" value="Transferase(Phosphotransferase) domain 1"/>
    <property type="match status" value="1"/>
</dbReference>
<dbReference type="InterPro" id="IPR030616">
    <property type="entry name" value="Aur-like"/>
</dbReference>
<dbReference type="InterPro" id="IPR011009">
    <property type="entry name" value="Kinase-like_dom_sf"/>
</dbReference>
<dbReference type="InterPro" id="IPR000719">
    <property type="entry name" value="Prot_kinase_dom"/>
</dbReference>
<dbReference type="InterPro" id="IPR017441">
    <property type="entry name" value="Protein_kinase_ATP_BS"/>
</dbReference>
<dbReference type="InterPro" id="IPR008271">
    <property type="entry name" value="Ser/Thr_kinase_AS"/>
</dbReference>
<dbReference type="PANTHER" id="PTHR24350">
    <property type="entry name" value="SERINE/THREONINE-PROTEIN KINASE IAL-RELATED"/>
    <property type="match status" value="1"/>
</dbReference>
<dbReference type="Pfam" id="PF00069">
    <property type="entry name" value="Pkinase"/>
    <property type="match status" value="1"/>
</dbReference>
<dbReference type="SMART" id="SM00220">
    <property type="entry name" value="S_TKc"/>
    <property type="match status" value="1"/>
</dbReference>
<dbReference type="SUPFAM" id="SSF56112">
    <property type="entry name" value="Protein kinase-like (PK-like)"/>
    <property type="match status" value="1"/>
</dbReference>
<dbReference type="PROSITE" id="PS00107">
    <property type="entry name" value="PROTEIN_KINASE_ATP"/>
    <property type="match status" value="1"/>
</dbReference>
<dbReference type="PROSITE" id="PS50011">
    <property type="entry name" value="PROTEIN_KINASE_DOM"/>
    <property type="match status" value="1"/>
</dbReference>
<dbReference type="PROSITE" id="PS00108">
    <property type="entry name" value="PROTEIN_KINASE_ST"/>
    <property type="match status" value="1"/>
</dbReference>
<name>AURK_DICDI</name>
<feature type="chain" id="PRO_0000362006" description="Aurora kinase">
    <location>
        <begin position="1"/>
        <end position="384"/>
    </location>
</feature>
<feature type="domain" description="Protein kinase" evidence="2">
    <location>
        <begin position="110"/>
        <end position="360"/>
    </location>
</feature>
<feature type="region of interest" description="Disordered" evidence="4">
    <location>
        <begin position="1"/>
        <end position="100"/>
    </location>
</feature>
<feature type="compositionally biased region" description="Polar residues" evidence="4">
    <location>
        <begin position="1"/>
        <end position="12"/>
    </location>
</feature>
<feature type="compositionally biased region" description="Polar residues" evidence="4">
    <location>
        <begin position="19"/>
        <end position="29"/>
    </location>
</feature>
<feature type="compositionally biased region" description="Low complexity" evidence="4">
    <location>
        <begin position="30"/>
        <end position="99"/>
    </location>
</feature>
<feature type="active site" description="Proton acceptor" evidence="2 3">
    <location>
        <position position="233"/>
    </location>
</feature>
<feature type="binding site" evidence="2">
    <location>
        <begin position="116"/>
        <end position="124"/>
    </location>
    <ligand>
        <name>ATP</name>
        <dbReference type="ChEBI" id="CHEBI:30616"/>
    </ligand>
</feature>
<feature type="binding site" evidence="2">
    <location>
        <position position="139"/>
    </location>
    <ligand>
        <name>ATP</name>
        <dbReference type="ChEBI" id="CHEBI:30616"/>
    </ligand>
</feature>
<keyword id="KW-0067">ATP-binding</keyword>
<keyword id="KW-0131">Cell cycle</keyword>
<keyword id="KW-0966">Cell projection</keyword>
<keyword id="KW-0137">Centromere</keyword>
<keyword id="KW-0158">Chromosome</keyword>
<keyword id="KW-0963">Cytoplasm</keyword>
<keyword id="KW-0206">Cytoskeleton</keyword>
<keyword id="KW-0418">Kinase</keyword>
<keyword id="KW-0547">Nucleotide-binding</keyword>
<keyword id="KW-1185">Reference proteome</keyword>
<keyword id="KW-0723">Serine/threonine-protein kinase</keyword>
<keyword id="KW-0808">Transferase</keyword>
<reference key="1">
    <citation type="journal article" date="2005" name="Nature">
        <title>The genome of the social amoeba Dictyostelium discoideum.</title>
        <authorList>
            <person name="Eichinger L."/>
            <person name="Pachebat J.A."/>
            <person name="Gloeckner G."/>
            <person name="Rajandream M.A."/>
            <person name="Sucgang R."/>
            <person name="Berriman M."/>
            <person name="Song J."/>
            <person name="Olsen R."/>
            <person name="Szafranski K."/>
            <person name="Xu Q."/>
            <person name="Tunggal B."/>
            <person name="Kummerfeld S."/>
            <person name="Madera M."/>
            <person name="Konfortov B.A."/>
            <person name="Rivero F."/>
            <person name="Bankier A.T."/>
            <person name="Lehmann R."/>
            <person name="Hamlin N."/>
            <person name="Davies R."/>
            <person name="Gaudet P."/>
            <person name="Fey P."/>
            <person name="Pilcher K."/>
            <person name="Chen G."/>
            <person name="Saunders D."/>
            <person name="Sodergren E.J."/>
            <person name="Davis P."/>
            <person name="Kerhornou A."/>
            <person name="Nie X."/>
            <person name="Hall N."/>
            <person name="Anjard C."/>
            <person name="Hemphill L."/>
            <person name="Bason N."/>
            <person name="Farbrother P."/>
            <person name="Desany B."/>
            <person name="Just E."/>
            <person name="Morio T."/>
            <person name="Rost R."/>
            <person name="Churcher C.M."/>
            <person name="Cooper J."/>
            <person name="Haydock S."/>
            <person name="van Driessche N."/>
            <person name="Cronin A."/>
            <person name="Goodhead I."/>
            <person name="Muzny D.M."/>
            <person name="Mourier T."/>
            <person name="Pain A."/>
            <person name="Lu M."/>
            <person name="Harper D."/>
            <person name="Lindsay R."/>
            <person name="Hauser H."/>
            <person name="James K.D."/>
            <person name="Quiles M."/>
            <person name="Madan Babu M."/>
            <person name="Saito T."/>
            <person name="Buchrieser C."/>
            <person name="Wardroper A."/>
            <person name="Felder M."/>
            <person name="Thangavelu M."/>
            <person name="Johnson D."/>
            <person name="Knights A."/>
            <person name="Loulseged H."/>
            <person name="Mungall K.L."/>
            <person name="Oliver K."/>
            <person name="Price C."/>
            <person name="Quail M.A."/>
            <person name="Urushihara H."/>
            <person name="Hernandez J."/>
            <person name="Rabbinowitsch E."/>
            <person name="Steffen D."/>
            <person name="Sanders M."/>
            <person name="Ma J."/>
            <person name="Kohara Y."/>
            <person name="Sharp S."/>
            <person name="Simmonds M.N."/>
            <person name="Spiegler S."/>
            <person name="Tivey A."/>
            <person name="Sugano S."/>
            <person name="White B."/>
            <person name="Walker D."/>
            <person name="Woodward J.R."/>
            <person name="Winckler T."/>
            <person name="Tanaka Y."/>
            <person name="Shaulsky G."/>
            <person name="Schleicher M."/>
            <person name="Weinstock G.M."/>
            <person name="Rosenthal A."/>
            <person name="Cox E.C."/>
            <person name="Chisholm R.L."/>
            <person name="Gibbs R.A."/>
            <person name="Loomis W.F."/>
            <person name="Platzer M."/>
            <person name="Kay R.R."/>
            <person name="Williams J.G."/>
            <person name="Dear P.H."/>
            <person name="Noegel A.A."/>
            <person name="Barrell B.G."/>
            <person name="Kuspa A."/>
        </authorList>
    </citation>
    <scope>NUCLEOTIDE SEQUENCE [LARGE SCALE GENOMIC DNA]</scope>
    <source>
        <strain>AX4</strain>
    </source>
</reference>
<reference key="2">
    <citation type="journal article" date="2006" name="Mol. Biol. Cell">
        <title>Contractile ring-independent localization of DdINCENP, a protein important for spindle stability and cytokinesis.</title>
        <authorList>
            <person name="Chen Q."/>
            <person name="Li H."/>
            <person name="De Lozanne A."/>
        </authorList>
    </citation>
    <scope>INTERACTION WITH ICPA</scope>
</reference>
<reference key="3">
    <citation type="journal article" date="2008" name="Eukaryot. Cell">
        <title>Dictyostelium Aurora kinase has properties of both Aurora A and Aurora B kinases.</title>
        <authorList>
            <person name="Li H."/>
            <person name="Chen Q."/>
            <person name="Kaller M."/>
            <person name="Nellen W."/>
            <person name="Graef R."/>
            <person name="De Lozanne A."/>
        </authorList>
    </citation>
    <scope>FUNCTION</scope>
    <scope>SUBCELLULAR LOCATION</scope>
    <scope>INTERACTION WITH ICPA</scope>
</reference>
<proteinExistence type="evidence at protein level"/>
<evidence type="ECO:0000250" key="1">
    <source>
        <dbReference type="UniProtKB" id="P97477"/>
    </source>
</evidence>
<evidence type="ECO:0000255" key="2">
    <source>
        <dbReference type="PROSITE-ProRule" id="PRU00159"/>
    </source>
</evidence>
<evidence type="ECO:0000255" key="3">
    <source>
        <dbReference type="PROSITE-ProRule" id="PRU10027"/>
    </source>
</evidence>
<evidence type="ECO:0000256" key="4">
    <source>
        <dbReference type="SAM" id="MobiDB-lite"/>
    </source>
</evidence>
<evidence type="ECO:0000269" key="5">
    <source>
    </source>
</evidence>
<evidence type="ECO:0000269" key="6">
    <source>
    </source>
</evidence>
<gene>
    <name type="primary">aurK</name>
    <name type="synonym">AurB</name>
    <name type="synonym">Aurora</name>
    <name type="ORF">DDB_G0279343</name>
</gene>
<organism>
    <name type="scientific">Dictyostelium discoideum</name>
    <name type="common">Social amoeba</name>
    <dbReference type="NCBI Taxonomy" id="44689"/>
    <lineage>
        <taxon>Eukaryota</taxon>
        <taxon>Amoebozoa</taxon>
        <taxon>Evosea</taxon>
        <taxon>Eumycetozoa</taxon>
        <taxon>Dictyostelia</taxon>
        <taxon>Dictyosteliales</taxon>
        <taxon>Dictyosteliaceae</taxon>
        <taxon>Dictyostelium</taxon>
    </lineage>
</organism>
<protein>
    <recommendedName>
        <fullName>Aurora kinase</fullName>
        <ecNumber>2.7.11.1</ecNumber>
    </recommendedName>
</protein>
<comment type="function">
    <text evidence="6">Part of a chromosomal passenger complex.</text>
</comment>
<comment type="catalytic activity">
    <reaction>
        <text>L-seryl-[protein] + ATP = O-phospho-L-seryl-[protein] + ADP + H(+)</text>
        <dbReference type="Rhea" id="RHEA:17989"/>
        <dbReference type="Rhea" id="RHEA-COMP:9863"/>
        <dbReference type="Rhea" id="RHEA-COMP:11604"/>
        <dbReference type="ChEBI" id="CHEBI:15378"/>
        <dbReference type="ChEBI" id="CHEBI:29999"/>
        <dbReference type="ChEBI" id="CHEBI:30616"/>
        <dbReference type="ChEBI" id="CHEBI:83421"/>
        <dbReference type="ChEBI" id="CHEBI:456216"/>
        <dbReference type="EC" id="2.7.11.1"/>
    </reaction>
</comment>
<comment type="catalytic activity">
    <reaction>
        <text>L-threonyl-[protein] + ATP = O-phospho-L-threonyl-[protein] + ADP + H(+)</text>
        <dbReference type="Rhea" id="RHEA:46608"/>
        <dbReference type="Rhea" id="RHEA-COMP:11060"/>
        <dbReference type="Rhea" id="RHEA-COMP:11605"/>
        <dbReference type="ChEBI" id="CHEBI:15378"/>
        <dbReference type="ChEBI" id="CHEBI:30013"/>
        <dbReference type="ChEBI" id="CHEBI:30616"/>
        <dbReference type="ChEBI" id="CHEBI:61977"/>
        <dbReference type="ChEBI" id="CHEBI:456216"/>
        <dbReference type="EC" id="2.7.11.1"/>
    </reaction>
</comment>
<comment type="subunit">
    <text evidence="5 6">Interacts with icpA. Forms a complex at the central spindle.</text>
</comment>
<comment type="interaction">
    <interactant intactId="EBI-2939723">
        <id>Q54WX4</id>
    </interactant>
    <interactant intactId="EBI-922339">
        <id>Q55GF9</id>
        <label>icpA</label>
    </interactant>
    <organismsDiffer>false</organismsDiffer>
    <experiments>4</experiments>
</comment>
<comment type="subcellular location">
    <subcellularLocation>
        <location evidence="6">Cytoplasm</location>
    </subcellularLocation>
    <subcellularLocation>
        <location evidence="6">Chromosome</location>
        <location evidence="6">Centromere</location>
    </subcellularLocation>
    <subcellularLocation>
        <location evidence="6">Cytoplasm</location>
        <location evidence="6">Cytoskeleton</location>
        <location evidence="6">Spindle pole</location>
    </subcellularLocation>
    <subcellularLocation>
        <location evidence="6">Cleavage furrow</location>
    </subcellularLocation>
    <subcellularLocation>
        <location evidence="1">Cell projection</location>
        <location evidence="1">Neuron projection</location>
    </subcellularLocation>
    <text>When cells entered mitosis, found at spindle poles during prometaphase. With the onset of anaphase, localized at the central spindle and remained there during telophase and early cytokinesis. At the end of cytokinesis, localized at the cytoplasmic bridge and eventually to breaking points. Also found at the cleavage furrow, late in cytokinesis, when the furrow becomes a thin cytoplasmic bridge.</text>
</comment>
<comment type="similarity">
    <text evidence="2">Belongs to the protein kinase superfamily. Ser/Thr protein kinase family. Aurora subfamily.</text>
</comment>